<organism>
    <name type="scientific">Photobacterium profundum (strain SS9)</name>
    <dbReference type="NCBI Taxonomy" id="298386"/>
    <lineage>
        <taxon>Bacteria</taxon>
        <taxon>Pseudomonadati</taxon>
        <taxon>Pseudomonadota</taxon>
        <taxon>Gammaproteobacteria</taxon>
        <taxon>Vibrionales</taxon>
        <taxon>Vibrionaceae</taxon>
        <taxon>Photobacterium</taxon>
    </lineage>
</organism>
<proteinExistence type="inferred from homology"/>
<protein>
    <recommendedName>
        <fullName evidence="1">Pantothenate synthetase</fullName>
        <shortName evidence="1">PS</shortName>
        <ecNumber evidence="1">6.3.2.1</ecNumber>
    </recommendedName>
    <alternativeName>
        <fullName evidence="1">Pantoate--beta-alanine ligase</fullName>
    </alternativeName>
    <alternativeName>
        <fullName evidence="1">Pantoate-activating enzyme</fullName>
    </alternativeName>
</protein>
<dbReference type="EC" id="6.3.2.1" evidence="1"/>
<dbReference type="EMBL" id="CR378673">
    <property type="protein sequence ID" value="CAG21482.1"/>
    <property type="molecule type" value="Genomic_DNA"/>
</dbReference>
<dbReference type="RefSeq" id="WP_011219736.1">
    <property type="nucleotide sequence ID" value="NC_006370.1"/>
</dbReference>
<dbReference type="SMR" id="Q6LMJ5"/>
<dbReference type="STRING" id="298386.PBPRA3176"/>
<dbReference type="KEGG" id="ppr:PBPRA3176"/>
<dbReference type="eggNOG" id="COG0414">
    <property type="taxonomic scope" value="Bacteria"/>
</dbReference>
<dbReference type="HOGENOM" id="CLU_047148_0_0_6"/>
<dbReference type="UniPathway" id="UPA00028">
    <property type="reaction ID" value="UER00005"/>
</dbReference>
<dbReference type="Proteomes" id="UP000000593">
    <property type="component" value="Chromosome 1"/>
</dbReference>
<dbReference type="GO" id="GO:0005829">
    <property type="term" value="C:cytosol"/>
    <property type="evidence" value="ECO:0007669"/>
    <property type="project" value="TreeGrafter"/>
</dbReference>
<dbReference type="GO" id="GO:0005524">
    <property type="term" value="F:ATP binding"/>
    <property type="evidence" value="ECO:0007669"/>
    <property type="project" value="UniProtKB-KW"/>
</dbReference>
<dbReference type="GO" id="GO:0004592">
    <property type="term" value="F:pantoate-beta-alanine ligase activity"/>
    <property type="evidence" value="ECO:0007669"/>
    <property type="project" value="UniProtKB-UniRule"/>
</dbReference>
<dbReference type="GO" id="GO:0015940">
    <property type="term" value="P:pantothenate biosynthetic process"/>
    <property type="evidence" value="ECO:0007669"/>
    <property type="project" value="UniProtKB-UniRule"/>
</dbReference>
<dbReference type="CDD" id="cd00560">
    <property type="entry name" value="PanC"/>
    <property type="match status" value="1"/>
</dbReference>
<dbReference type="FunFam" id="3.30.1300.10:FF:000001">
    <property type="entry name" value="Pantothenate synthetase"/>
    <property type="match status" value="1"/>
</dbReference>
<dbReference type="FunFam" id="3.40.50.620:FF:000013">
    <property type="entry name" value="Pantothenate synthetase"/>
    <property type="match status" value="1"/>
</dbReference>
<dbReference type="Gene3D" id="3.40.50.620">
    <property type="entry name" value="HUPs"/>
    <property type="match status" value="1"/>
</dbReference>
<dbReference type="Gene3D" id="3.30.1300.10">
    <property type="entry name" value="Pantoate-beta-alanine ligase, C-terminal domain"/>
    <property type="match status" value="1"/>
</dbReference>
<dbReference type="HAMAP" id="MF_00158">
    <property type="entry name" value="PanC"/>
    <property type="match status" value="1"/>
</dbReference>
<dbReference type="InterPro" id="IPR004821">
    <property type="entry name" value="Cyt_trans-like"/>
</dbReference>
<dbReference type="InterPro" id="IPR003721">
    <property type="entry name" value="Pantoate_ligase"/>
</dbReference>
<dbReference type="InterPro" id="IPR042176">
    <property type="entry name" value="Pantoate_ligase_C"/>
</dbReference>
<dbReference type="InterPro" id="IPR014729">
    <property type="entry name" value="Rossmann-like_a/b/a_fold"/>
</dbReference>
<dbReference type="NCBIfam" id="TIGR00125">
    <property type="entry name" value="cyt_tran_rel"/>
    <property type="match status" value="1"/>
</dbReference>
<dbReference type="NCBIfam" id="TIGR00018">
    <property type="entry name" value="panC"/>
    <property type="match status" value="1"/>
</dbReference>
<dbReference type="PANTHER" id="PTHR21299">
    <property type="entry name" value="CYTIDYLATE KINASE/PANTOATE-BETA-ALANINE LIGASE"/>
    <property type="match status" value="1"/>
</dbReference>
<dbReference type="PANTHER" id="PTHR21299:SF1">
    <property type="entry name" value="PANTOATE--BETA-ALANINE LIGASE"/>
    <property type="match status" value="1"/>
</dbReference>
<dbReference type="Pfam" id="PF02569">
    <property type="entry name" value="Pantoate_ligase"/>
    <property type="match status" value="1"/>
</dbReference>
<dbReference type="SUPFAM" id="SSF52374">
    <property type="entry name" value="Nucleotidylyl transferase"/>
    <property type="match status" value="1"/>
</dbReference>
<comment type="function">
    <text evidence="1">Catalyzes the condensation of pantoate with beta-alanine in an ATP-dependent reaction via a pantoyl-adenylate intermediate.</text>
</comment>
<comment type="catalytic activity">
    <reaction evidence="1">
        <text>(R)-pantoate + beta-alanine + ATP = (R)-pantothenate + AMP + diphosphate + H(+)</text>
        <dbReference type="Rhea" id="RHEA:10912"/>
        <dbReference type="ChEBI" id="CHEBI:15378"/>
        <dbReference type="ChEBI" id="CHEBI:15980"/>
        <dbReference type="ChEBI" id="CHEBI:29032"/>
        <dbReference type="ChEBI" id="CHEBI:30616"/>
        <dbReference type="ChEBI" id="CHEBI:33019"/>
        <dbReference type="ChEBI" id="CHEBI:57966"/>
        <dbReference type="ChEBI" id="CHEBI:456215"/>
        <dbReference type="EC" id="6.3.2.1"/>
    </reaction>
</comment>
<comment type="pathway">
    <text evidence="1">Cofactor biosynthesis; (R)-pantothenate biosynthesis; (R)-pantothenate from (R)-pantoate and beta-alanine: step 1/1.</text>
</comment>
<comment type="subunit">
    <text evidence="1">Homodimer.</text>
</comment>
<comment type="subcellular location">
    <subcellularLocation>
        <location evidence="1">Cytoplasm</location>
    </subcellularLocation>
</comment>
<comment type="miscellaneous">
    <text evidence="1">The reaction proceeds by a bi uni uni bi ping pong mechanism.</text>
</comment>
<comment type="similarity">
    <text evidence="1">Belongs to the pantothenate synthetase family.</text>
</comment>
<evidence type="ECO:0000255" key="1">
    <source>
        <dbReference type="HAMAP-Rule" id="MF_00158"/>
    </source>
</evidence>
<name>PANC_PHOPR</name>
<sequence length="295" mass="32986">MQTFAEIALLREQIRAWRREGRRIAFVPTMGNLHDGHLTLVRKAREHADIVVVSIFVNPMQFEKADDLTNYPRTLENDLAKLNSEGVDLVFTPTPEVMYPQGLERQTFVEVPGLSQMLEGALRPGHFRGVATVVTKLFNMVQPDVACFGEKDYQQLALLRQMTLDMAMDIEIIGVPTVREMDGLAMSSRNGYLTVDERQRAPVLARTMRWVSSQMRGGRTDYSEIIVDANDQLRAAGLQPDESYIRDAVTLQAVSEETQQAVILMSAQLGKARLIDNQVVELTQPAAPVAEAAES</sequence>
<feature type="chain" id="PRO_0000128252" description="Pantothenate synthetase">
    <location>
        <begin position="1"/>
        <end position="295"/>
    </location>
</feature>
<feature type="active site" description="Proton donor" evidence="1">
    <location>
        <position position="37"/>
    </location>
</feature>
<feature type="binding site" evidence="1">
    <location>
        <begin position="30"/>
        <end position="37"/>
    </location>
    <ligand>
        <name>ATP</name>
        <dbReference type="ChEBI" id="CHEBI:30616"/>
    </ligand>
</feature>
<feature type="binding site" evidence="1">
    <location>
        <position position="61"/>
    </location>
    <ligand>
        <name>(R)-pantoate</name>
        <dbReference type="ChEBI" id="CHEBI:15980"/>
    </ligand>
</feature>
<feature type="binding site" evidence="1">
    <location>
        <position position="61"/>
    </location>
    <ligand>
        <name>beta-alanine</name>
        <dbReference type="ChEBI" id="CHEBI:57966"/>
    </ligand>
</feature>
<feature type="binding site" evidence="1">
    <location>
        <begin position="149"/>
        <end position="152"/>
    </location>
    <ligand>
        <name>ATP</name>
        <dbReference type="ChEBI" id="CHEBI:30616"/>
    </ligand>
</feature>
<feature type="binding site" evidence="1">
    <location>
        <position position="155"/>
    </location>
    <ligand>
        <name>(R)-pantoate</name>
        <dbReference type="ChEBI" id="CHEBI:15980"/>
    </ligand>
</feature>
<feature type="binding site" evidence="1">
    <location>
        <position position="178"/>
    </location>
    <ligand>
        <name>ATP</name>
        <dbReference type="ChEBI" id="CHEBI:30616"/>
    </ligand>
</feature>
<feature type="binding site" evidence="1">
    <location>
        <begin position="186"/>
        <end position="189"/>
    </location>
    <ligand>
        <name>ATP</name>
        <dbReference type="ChEBI" id="CHEBI:30616"/>
    </ligand>
</feature>
<keyword id="KW-0067">ATP-binding</keyword>
<keyword id="KW-0963">Cytoplasm</keyword>
<keyword id="KW-0436">Ligase</keyword>
<keyword id="KW-0547">Nucleotide-binding</keyword>
<keyword id="KW-0566">Pantothenate biosynthesis</keyword>
<keyword id="KW-1185">Reference proteome</keyword>
<accession>Q6LMJ5</accession>
<reference key="1">
    <citation type="journal article" date="2005" name="Science">
        <title>Life at depth: Photobacterium profundum genome sequence and expression analysis.</title>
        <authorList>
            <person name="Vezzi A."/>
            <person name="Campanaro S."/>
            <person name="D'Angelo M."/>
            <person name="Simonato F."/>
            <person name="Vitulo N."/>
            <person name="Lauro F.M."/>
            <person name="Cestaro A."/>
            <person name="Malacrida G."/>
            <person name="Simionati B."/>
            <person name="Cannata N."/>
            <person name="Romualdi C."/>
            <person name="Bartlett D.H."/>
            <person name="Valle G."/>
        </authorList>
    </citation>
    <scope>NUCLEOTIDE SEQUENCE [LARGE SCALE GENOMIC DNA]</scope>
    <source>
        <strain>ATCC BAA-1253 / SS9</strain>
    </source>
</reference>
<gene>
    <name evidence="1" type="primary">panC</name>
    <name type="ordered locus">PBPRA3176</name>
</gene>